<sequence>MTDDQILAEFRAADALLQGHFLLSSGRHSEYYLQCARVLMDTERAGRLAAALAAKLPRELKQAIDLVVSPAMGGVIIGHEMGRALGKPAIFVERPTGTFELRRGFTIDPGAKVLMVEDVVTTGLSSREAMEAVRAAGGEVVAEAALVDRSAGSNIDLGVPFYPLVAINFPTYAADELPPELAGTEAIKPGSRSVAA</sequence>
<organism>
    <name type="scientific">Sphingopyxis alaskensis (strain DSM 13593 / LMG 18877 / RB2256)</name>
    <name type="common">Sphingomonas alaskensis</name>
    <dbReference type="NCBI Taxonomy" id="317655"/>
    <lineage>
        <taxon>Bacteria</taxon>
        <taxon>Pseudomonadati</taxon>
        <taxon>Pseudomonadota</taxon>
        <taxon>Alphaproteobacteria</taxon>
        <taxon>Sphingomonadales</taxon>
        <taxon>Sphingomonadaceae</taxon>
        <taxon>Sphingopyxis</taxon>
    </lineage>
</organism>
<keyword id="KW-0328">Glycosyltransferase</keyword>
<keyword id="KW-0460">Magnesium</keyword>
<keyword id="KW-0665">Pyrimidine biosynthesis</keyword>
<keyword id="KW-1185">Reference proteome</keyword>
<keyword id="KW-0808">Transferase</keyword>
<reference key="1">
    <citation type="journal article" date="2009" name="Proc. Natl. Acad. Sci. U.S.A.">
        <title>The genomic basis of trophic strategy in marine bacteria.</title>
        <authorList>
            <person name="Lauro F.M."/>
            <person name="McDougald D."/>
            <person name="Thomas T."/>
            <person name="Williams T.J."/>
            <person name="Egan S."/>
            <person name="Rice S."/>
            <person name="DeMaere M.Z."/>
            <person name="Ting L."/>
            <person name="Ertan H."/>
            <person name="Johnson J."/>
            <person name="Ferriera S."/>
            <person name="Lapidus A."/>
            <person name="Anderson I."/>
            <person name="Kyrpides N."/>
            <person name="Munk A.C."/>
            <person name="Detter C."/>
            <person name="Han C.S."/>
            <person name="Brown M.V."/>
            <person name="Robb F.T."/>
            <person name="Kjelleberg S."/>
            <person name="Cavicchioli R."/>
        </authorList>
    </citation>
    <scope>NUCLEOTIDE SEQUENCE [LARGE SCALE GENOMIC DNA]</scope>
    <source>
        <strain>DSM 13593 / LMG 18877 / RB2256</strain>
    </source>
</reference>
<gene>
    <name evidence="1" type="primary">pyrE</name>
    <name type="ordered locus">Sala_1406</name>
</gene>
<feature type="chain" id="PRO_1000066303" description="Orotate phosphoribosyltransferase">
    <location>
        <begin position="1"/>
        <end position="196"/>
    </location>
</feature>
<feature type="binding site" evidence="1">
    <location>
        <begin position="117"/>
        <end position="125"/>
    </location>
    <ligand>
        <name>5-phospho-alpha-D-ribose 1-diphosphate</name>
        <dbReference type="ChEBI" id="CHEBI:58017"/>
    </ligand>
</feature>
<feature type="binding site" evidence="1">
    <location>
        <position position="121"/>
    </location>
    <ligand>
        <name>orotate</name>
        <dbReference type="ChEBI" id="CHEBI:30839"/>
    </ligand>
</feature>
<feature type="binding site" evidence="1">
    <location>
        <position position="149"/>
    </location>
    <ligand>
        <name>orotate</name>
        <dbReference type="ChEBI" id="CHEBI:30839"/>
    </ligand>
</feature>
<dbReference type="EC" id="2.4.2.10" evidence="1"/>
<dbReference type="EMBL" id="CP000356">
    <property type="protein sequence ID" value="ABF53120.1"/>
    <property type="molecule type" value="Genomic_DNA"/>
</dbReference>
<dbReference type="RefSeq" id="WP_011541700.1">
    <property type="nucleotide sequence ID" value="NC_008048.1"/>
</dbReference>
<dbReference type="SMR" id="Q1GTA2"/>
<dbReference type="STRING" id="317655.Sala_1406"/>
<dbReference type="KEGG" id="sal:Sala_1406"/>
<dbReference type="eggNOG" id="COG0461">
    <property type="taxonomic scope" value="Bacteria"/>
</dbReference>
<dbReference type="HOGENOM" id="CLU_074878_3_0_5"/>
<dbReference type="OrthoDB" id="9783570at2"/>
<dbReference type="UniPathway" id="UPA00070">
    <property type="reaction ID" value="UER00119"/>
</dbReference>
<dbReference type="Proteomes" id="UP000006578">
    <property type="component" value="Chromosome"/>
</dbReference>
<dbReference type="GO" id="GO:0000287">
    <property type="term" value="F:magnesium ion binding"/>
    <property type="evidence" value="ECO:0007669"/>
    <property type="project" value="UniProtKB-UniRule"/>
</dbReference>
<dbReference type="GO" id="GO:0004588">
    <property type="term" value="F:orotate phosphoribosyltransferase activity"/>
    <property type="evidence" value="ECO:0007669"/>
    <property type="project" value="UniProtKB-UniRule"/>
</dbReference>
<dbReference type="GO" id="GO:0044205">
    <property type="term" value="P:'de novo' UMP biosynthetic process"/>
    <property type="evidence" value="ECO:0007669"/>
    <property type="project" value="UniProtKB-UniRule"/>
</dbReference>
<dbReference type="GO" id="GO:0019856">
    <property type="term" value="P:pyrimidine nucleobase biosynthetic process"/>
    <property type="evidence" value="ECO:0007669"/>
    <property type="project" value="InterPro"/>
</dbReference>
<dbReference type="CDD" id="cd06223">
    <property type="entry name" value="PRTases_typeI"/>
    <property type="match status" value="1"/>
</dbReference>
<dbReference type="Gene3D" id="3.40.50.2020">
    <property type="match status" value="1"/>
</dbReference>
<dbReference type="HAMAP" id="MF_01208">
    <property type="entry name" value="PyrE"/>
    <property type="match status" value="1"/>
</dbReference>
<dbReference type="InterPro" id="IPR023031">
    <property type="entry name" value="OPRT"/>
</dbReference>
<dbReference type="InterPro" id="IPR006273">
    <property type="entry name" value="Orotate_PRibTrfase_bac"/>
</dbReference>
<dbReference type="InterPro" id="IPR000836">
    <property type="entry name" value="PRibTrfase_dom"/>
</dbReference>
<dbReference type="InterPro" id="IPR029057">
    <property type="entry name" value="PRTase-like"/>
</dbReference>
<dbReference type="NCBIfam" id="TIGR01367">
    <property type="entry name" value="pyrE_Therm"/>
    <property type="match status" value="1"/>
</dbReference>
<dbReference type="PANTHER" id="PTHR19278">
    <property type="entry name" value="OROTATE PHOSPHORIBOSYLTRANSFERASE"/>
    <property type="match status" value="1"/>
</dbReference>
<dbReference type="PANTHER" id="PTHR19278:SF9">
    <property type="entry name" value="URIDINE 5'-MONOPHOSPHATE SYNTHASE"/>
    <property type="match status" value="1"/>
</dbReference>
<dbReference type="Pfam" id="PF00156">
    <property type="entry name" value="Pribosyltran"/>
    <property type="match status" value="1"/>
</dbReference>
<dbReference type="SUPFAM" id="SSF53271">
    <property type="entry name" value="PRTase-like"/>
    <property type="match status" value="1"/>
</dbReference>
<dbReference type="PROSITE" id="PS00103">
    <property type="entry name" value="PUR_PYR_PR_TRANSFER"/>
    <property type="match status" value="1"/>
</dbReference>
<comment type="function">
    <text evidence="1">Catalyzes the transfer of a ribosyl phosphate group from 5-phosphoribose 1-diphosphate to orotate, leading to the formation of orotidine monophosphate (OMP).</text>
</comment>
<comment type="catalytic activity">
    <reaction evidence="1">
        <text>orotidine 5'-phosphate + diphosphate = orotate + 5-phospho-alpha-D-ribose 1-diphosphate</text>
        <dbReference type="Rhea" id="RHEA:10380"/>
        <dbReference type="ChEBI" id="CHEBI:30839"/>
        <dbReference type="ChEBI" id="CHEBI:33019"/>
        <dbReference type="ChEBI" id="CHEBI:57538"/>
        <dbReference type="ChEBI" id="CHEBI:58017"/>
        <dbReference type="EC" id="2.4.2.10"/>
    </reaction>
</comment>
<comment type="cofactor">
    <cofactor evidence="1">
        <name>Mg(2+)</name>
        <dbReference type="ChEBI" id="CHEBI:18420"/>
    </cofactor>
</comment>
<comment type="pathway">
    <text evidence="1">Pyrimidine metabolism; UMP biosynthesis via de novo pathway; UMP from orotate: step 1/2.</text>
</comment>
<comment type="subunit">
    <text evidence="1">Homodimer.</text>
</comment>
<comment type="similarity">
    <text evidence="1">Belongs to the purine/pyrimidine phosphoribosyltransferase family. PyrE subfamily.</text>
</comment>
<protein>
    <recommendedName>
        <fullName evidence="1">Orotate phosphoribosyltransferase</fullName>
        <shortName evidence="1">OPRT</shortName>
        <shortName evidence="1">OPRTase</shortName>
        <ecNumber evidence="1">2.4.2.10</ecNumber>
    </recommendedName>
</protein>
<name>PYRE_SPHAL</name>
<proteinExistence type="inferred from homology"/>
<accession>Q1GTA2</accession>
<evidence type="ECO:0000255" key="1">
    <source>
        <dbReference type="HAMAP-Rule" id="MF_01208"/>
    </source>
</evidence>